<proteinExistence type="inferred from homology"/>
<reference key="1">
    <citation type="journal article" date="2007" name="PLoS Genet.">
        <title>Patterns and implications of gene gain and loss in the evolution of Prochlorococcus.</title>
        <authorList>
            <person name="Kettler G.C."/>
            <person name="Martiny A.C."/>
            <person name="Huang K."/>
            <person name="Zucker J."/>
            <person name="Coleman M.L."/>
            <person name="Rodrigue S."/>
            <person name="Chen F."/>
            <person name="Lapidus A."/>
            <person name="Ferriera S."/>
            <person name="Johnson J."/>
            <person name="Steglich C."/>
            <person name="Church G.M."/>
            <person name="Richardson P."/>
            <person name="Chisholm S.W."/>
        </authorList>
    </citation>
    <scope>NUCLEOTIDE SEQUENCE [LARGE SCALE GENOMIC DNA]</scope>
    <source>
        <strain>MIT 9211</strain>
    </source>
</reference>
<evidence type="ECO:0000255" key="1">
    <source>
        <dbReference type="HAMAP-Rule" id="MF_01576"/>
    </source>
</evidence>
<sequence length="302" mass="32534">MAHKLDGKQLAGEIEQRLSHEITLCLKKGVRPPGLAVIRVGDDPASQVYVSNKEKACRRAGIKSFGCHLDANSSFREIEEQIIKLNSNQEVDGILLQLPLPIGLDAGRLLKVIDPRKDADGLHTLNLGRLLKDEIGPRSCTPAGVMALLAANQIEIKGKNTVVIGRSILVGKPMALMLQAANATVTLVHSHTRDLIGFTKQAEILVVAAGKPQLIGLEHVKEKSVVVDVGIHRVFKDQNLGDAGGYKLCGDVRREEVDDFVSAITPVPGGVGPMTVAMLLVNTVNSWQQHCDLSLSLDDLLP</sequence>
<dbReference type="EC" id="1.5.1.5" evidence="1"/>
<dbReference type="EC" id="3.5.4.9" evidence="1"/>
<dbReference type="EMBL" id="CP000878">
    <property type="protein sequence ID" value="ABX09051.1"/>
    <property type="molecule type" value="Genomic_DNA"/>
</dbReference>
<dbReference type="RefSeq" id="WP_012195672.1">
    <property type="nucleotide sequence ID" value="NC_009976.1"/>
</dbReference>
<dbReference type="SMR" id="A9BB39"/>
<dbReference type="STRING" id="93059.P9211_11201"/>
<dbReference type="KEGG" id="pmj:P9211_11201"/>
<dbReference type="eggNOG" id="COG0190">
    <property type="taxonomic scope" value="Bacteria"/>
</dbReference>
<dbReference type="HOGENOM" id="CLU_034045_2_1_3"/>
<dbReference type="OrthoDB" id="9803580at2"/>
<dbReference type="UniPathway" id="UPA00193"/>
<dbReference type="Proteomes" id="UP000000788">
    <property type="component" value="Chromosome"/>
</dbReference>
<dbReference type="GO" id="GO:0005829">
    <property type="term" value="C:cytosol"/>
    <property type="evidence" value="ECO:0007669"/>
    <property type="project" value="TreeGrafter"/>
</dbReference>
<dbReference type="GO" id="GO:0004477">
    <property type="term" value="F:methenyltetrahydrofolate cyclohydrolase activity"/>
    <property type="evidence" value="ECO:0007669"/>
    <property type="project" value="UniProtKB-UniRule"/>
</dbReference>
<dbReference type="GO" id="GO:0004488">
    <property type="term" value="F:methylenetetrahydrofolate dehydrogenase (NADP+) activity"/>
    <property type="evidence" value="ECO:0007669"/>
    <property type="project" value="UniProtKB-UniRule"/>
</dbReference>
<dbReference type="GO" id="GO:0000105">
    <property type="term" value="P:L-histidine biosynthetic process"/>
    <property type="evidence" value="ECO:0007669"/>
    <property type="project" value="UniProtKB-KW"/>
</dbReference>
<dbReference type="GO" id="GO:0009086">
    <property type="term" value="P:methionine biosynthetic process"/>
    <property type="evidence" value="ECO:0007669"/>
    <property type="project" value="UniProtKB-KW"/>
</dbReference>
<dbReference type="GO" id="GO:0006164">
    <property type="term" value="P:purine nucleotide biosynthetic process"/>
    <property type="evidence" value="ECO:0007669"/>
    <property type="project" value="UniProtKB-KW"/>
</dbReference>
<dbReference type="GO" id="GO:0035999">
    <property type="term" value="P:tetrahydrofolate interconversion"/>
    <property type="evidence" value="ECO:0007669"/>
    <property type="project" value="UniProtKB-UniRule"/>
</dbReference>
<dbReference type="CDD" id="cd01080">
    <property type="entry name" value="NAD_bind_m-THF_DH_Cyclohyd"/>
    <property type="match status" value="1"/>
</dbReference>
<dbReference type="FunFam" id="3.40.50.720:FF:000006">
    <property type="entry name" value="Bifunctional protein FolD"/>
    <property type="match status" value="1"/>
</dbReference>
<dbReference type="FunFam" id="3.40.50.10860:FF:000005">
    <property type="entry name" value="C-1-tetrahydrofolate synthase, cytoplasmic, putative"/>
    <property type="match status" value="1"/>
</dbReference>
<dbReference type="Gene3D" id="3.40.50.10860">
    <property type="entry name" value="Leucine Dehydrogenase, chain A, domain 1"/>
    <property type="match status" value="1"/>
</dbReference>
<dbReference type="Gene3D" id="3.40.50.720">
    <property type="entry name" value="NAD(P)-binding Rossmann-like Domain"/>
    <property type="match status" value="1"/>
</dbReference>
<dbReference type="HAMAP" id="MF_01576">
    <property type="entry name" value="THF_DHG_CYH"/>
    <property type="match status" value="1"/>
</dbReference>
<dbReference type="InterPro" id="IPR046346">
    <property type="entry name" value="Aminoacid_DH-like_N_sf"/>
</dbReference>
<dbReference type="InterPro" id="IPR036291">
    <property type="entry name" value="NAD(P)-bd_dom_sf"/>
</dbReference>
<dbReference type="InterPro" id="IPR000672">
    <property type="entry name" value="THF_DH/CycHdrlase"/>
</dbReference>
<dbReference type="InterPro" id="IPR020630">
    <property type="entry name" value="THF_DH/CycHdrlase_cat_dom"/>
</dbReference>
<dbReference type="InterPro" id="IPR020867">
    <property type="entry name" value="THF_DH/CycHdrlase_CS"/>
</dbReference>
<dbReference type="InterPro" id="IPR020631">
    <property type="entry name" value="THF_DH/CycHdrlase_NAD-bd_dom"/>
</dbReference>
<dbReference type="NCBIfam" id="NF010783">
    <property type="entry name" value="PRK14186.1"/>
    <property type="match status" value="1"/>
</dbReference>
<dbReference type="PANTHER" id="PTHR48099:SF5">
    <property type="entry name" value="C-1-TETRAHYDROFOLATE SYNTHASE, CYTOPLASMIC"/>
    <property type="match status" value="1"/>
</dbReference>
<dbReference type="PANTHER" id="PTHR48099">
    <property type="entry name" value="C-1-TETRAHYDROFOLATE SYNTHASE, CYTOPLASMIC-RELATED"/>
    <property type="match status" value="1"/>
</dbReference>
<dbReference type="Pfam" id="PF00763">
    <property type="entry name" value="THF_DHG_CYH"/>
    <property type="match status" value="1"/>
</dbReference>
<dbReference type="Pfam" id="PF02882">
    <property type="entry name" value="THF_DHG_CYH_C"/>
    <property type="match status" value="1"/>
</dbReference>
<dbReference type="PRINTS" id="PR00085">
    <property type="entry name" value="THFDHDRGNASE"/>
</dbReference>
<dbReference type="SUPFAM" id="SSF53223">
    <property type="entry name" value="Aminoacid dehydrogenase-like, N-terminal domain"/>
    <property type="match status" value="1"/>
</dbReference>
<dbReference type="SUPFAM" id="SSF51735">
    <property type="entry name" value="NAD(P)-binding Rossmann-fold domains"/>
    <property type="match status" value="1"/>
</dbReference>
<dbReference type="PROSITE" id="PS00767">
    <property type="entry name" value="THF_DHG_CYH_2"/>
    <property type="match status" value="1"/>
</dbReference>
<keyword id="KW-0028">Amino-acid biosynthesis</keyword>
<keyword id="KW-0368">Histidine biosynthesis</keyword>
<keyword id="KW-0378">Hydrolase</keyword>
<keyword id="KW-0486">Methionine biosynthesis</keyword>
<keyword id="KW-0511">Multifunctional enzyme</keyword>
<keyword id="KW-0521">NADP</keyword>
<keyword id="KW-0554">One-carbon metabolism</keyword>
<keyword id="KW-0560">Oxidoreductase</keyword>
<keyword id="KW-0658">Purine biosynthesis</keyword>
<keyword id="KW-1185">Reference proteome</keyword>
<organism>
    <name type="scientific">Prochlorococcus marinus (strain MIT 9211)</name>
    <dbReference type="NCBI Taxonomy" id="93059"/>
    <lineage>
        <taxon>Bacteria</taxon>
        <taxon>Bacillati</taxon>
        <taxon>Cyanobacteriota</taxon>
        <taxon>Cyanophyceae</taxon>
        <taxon>Synechococcales</taxon>
        <taxon>Prochlorococcaceae</taxon>
        <taxon>Prochlorococcus</taxon>
    </lineage>
</organism>
<gene>
    <name evidence="1" type="primary">folD</name>
    <name type="ordered locus">P9211_11201</name>
</gene>
<protein>
    <recommendedName>
        <fullName evidence="1">Bifunctional protein FolD</fullName>
    </recommendedName>
    <domain>
        <recommendedName>
            <fullName evidence="1">Methylenetetrahydrofolate dehydrogenase</fullName>
            <ecNumber evidence="1">1.5.1.5</ecNumber>
        </recommendedName>
    </domain>
    <domain>
        <recommendedName>
            <fullName evidence="1">Methenyltetrahydrofolate cyclohydrolase</fullName>
            <ecNumber evidence="1">3.5.4.9</ecNumber>
        </recommendedName>
    </domain>
</protein>
<accession>A9BB39</accession>
<feature type="chain" id="PRO_1000147509" description="Bifunctional protein FolD">
    <location>
        <begin position="1"/>
        <end position="302"/>
    </location>
</feature>
<feature type="binding site" evidence="1">
    <location>
        <begin position="165"/>
        <end position="167"/>
    </location>
    <ligand>
        <name>NADP(+)</name>
        <dbReference type="ChEBI" id="CHEBI:58349"/>
    </ligand>
</feature>
<feature type="binding site" evidence="1">
    <location>
        <position position="190"/>
    </location>
    <ligand>
        <name>NADP(+)</name>
        <dbReference type="ChEBI" id="CHEBI:58349"/>
    </ligand>
</feature>
<feature type="binding site" evidence="1">
    <location>
        <position position="231"/>
    </location>
    <ligand>
        <name>NADP(+)</name>
        <dbReference type="ChEBI" id="CHEBI:58349"/>
    </ligand>
</feature>
<name>FOLD_PROM4</name>
<comment type="function">
    <text evidence="1">Catalyzes the oxidation of 5,10-methylenetetrahydrofolate to 5,10-methenyltetrahydrofolate and then the hydrolysis of 5,10-methenyltetrahydrofolate to 10-formyltetrahydrofolate.</text>
</comment>
<comment type="catalytic activity">
    <reaction evidence="1">
        <text>(6R)-5,10-methylene-5,6,7,8-tetrahydrofolate + NADP(+) = (6R)-5,10-methenyltetrahydrofolate + NADPH</text>
        <dbReference type="Rhea" id="RHEA:22812"/>
        <dbReference type="ChEBI" id="CHEBI:15636"/>
        <dbReference type="ChEBI" id="CHEBI:57455"/>
        <dbReference type="ChEBI" id="CHEBI:57783"/>
        <dbReference type="ChEBI" id="CHEBI:58349"/>
        <dbReference type="EC" id="1.5.1.5"/>
    </reaction>
</comment>
<comment type="catalytic activity">
    <reaction evidence="1">
        <text>(6R)-5,10-methenyltetrahydrofolate + H2O = (6R)-10-formyltetrahydrofolate + H(+)</text>
        <dbReference type="Rhea" id="RHEA:23700"/>
        <dbReference type="ChEBI" id="CHEBI:15377"/>
        <dbReference type="ChEBI" id="CHEBI:15378"/>
        <dbReference type="ChEBI" id="CHEBI:57455"/>
        <dbReference type="ChEBI" id="CHEBI:195366"/>
        <dbReference type="EC" id="3.5.4.9"/>
    </reaction>
</comment>
<comment type="pathway">
    <text evidence="1">One-carbon metabolism; tetrahydrofolate interconversion.</text>
</comment>
<comment type="subunit">
    <text evidence="1">Homodimer.</text>
</comment>
<comment type="similarity">
    <text evidence="1">Belongs to the tetrahydrofolate dehydrogenase/cyclohydrolase family.</text>
</comment>